<sequence>MASTPLLYVLVIILSAVYLLRRRSNPLYAIPAVGPSLPLLSYIGALRFTRHAHEMLQEGYIKYKGSAFRLAQLDRWVVVLCGPKMNEELQRMPDDQVSFLDAAEDLVQTKYTIAKNVIENPIHISVMRGPLTRNLAPLLLDVIDEINIGVEEHIPTRGDEWVSVPGLATMTQIVSRASNRVFVGLPMCRDPEYFKIISNFPRDVAKGRFILSITPTFLKPIIGPLLPWSRRTVRQYSALMKPIIEERQRLLLEHRDPHDPDRPNDFMTWLIEEGRAVDQPVDLLVNALLSSNFVAIHTSSISVTHALYNLAAYPEYQQPVRDELVEVIKAEGWTKQAFGKMWKLDSFMRESQRMFGISAISVIRKALKDVTLSNGTVIPAGTLIAVAAEGTHYDEGSYDNPYIFNPFRFSDMREDEGERIKHQYVSTSSEYVSFGHGKHACPGRFFASNELKAILSRLILDFDMKFGGDGHRPPNQWFGSSIIPSQTANVMFRKRPDAGL</sequence>
<evidence type="ECO:0000250" key="1">
    <source>
        <dbReference type="UniProtKB" id="P04798"/>
    </source>
</evidence>
<evidence type="ECO:0000255" key="2"/>
<evidence type="ECO:0000255" key="3">
    <source>
        <dbReference type="PROSITE-ProRule" id="PRU00498"/>
    </source>
</evidence>
<evidence type="ECO:0000269" key="4">
    <source>
    </source>
</evidence>
<evidence type="ECO:0000303" key="5">
    <source>
    </source>
</evidence>
<evidence type="ECO:0000305" key="6"/>
<evidence type="ECO:0000305" key="7">
    <source>
    </source>
</evidence>
<reference key="1">
    <citation type="journal article" date="2012" name="Arch. Microbiol.">
        <title>Molecular identification and functional characterization of cytochrome P450 monooxygenases from the brown-rot basidiomycete Postia placenta.</title>
        <authorList>
            <person name="Ide M."/>
            <person name="Ichinose H."/>
            <person name="Wariishi H."/>
        </authorList>
    </citation>
    <scope>NUCLEOTIDE SEQUENCE [MRNA]</scope>
    <scope>IDENTIFICATION</scope>
    <scope>FUNCTION</scope>
    <scope>CATALYTIC ACTIVITY</scope>
    <source>
        <strain>ATCC 44394 / Madison 698-R</strain>
    </source>
</reference>
<comment type="function">
    <text evidence="4">Cytochrome P450 monooxygenase that is able to use testosterone as a substrate for oxidation.</text>
</comment>
<comment type="cofactor">
    <cofactor evidence="1">
        <name>heme</name>
        <dbReference type="ChEBI" id="CHEBI:30413"/>
    </cofactor>
</comment>
<comment type="pathway">
    <text evidence="6">Secondary metabolite biosynthesis.</text>
</comment>
<comment type="subcellular location">
    <subcellularLocation>
        <location evidence="2">Membrane</location>
        <topology evidence="2">Multi-pass membrane protein</topology>
    </subcellularLocation>
</comment>
<comment type="similarity">
    <text evidence="6">Belongs to the cytochrome P450 family.</text>
</comment>
<gene>
    <name evidence="5" type="primary">CYP103</name>
    <name evidence="5" type="synonym">CYP512P1v2</name>
</gene>
<name>CY103_POSPM</name>
<keyword id="KW-0325">Glycoprotein</keyword>
<keyword id="KW-0349">Heme</keyword>
<keyword id="KW-0408">Iron</keyword>
<keyword id="KW-0472">Membrane</keyword>
<keyword id="KW-0479">Metal-binding</keyword>
<keyword id="KW-0503">Monooxygenase</keyword>
<keyword id="KW-0560">Oxidoreductase</keyword>
<keyword id="KW-0812">Transmembrane</keyword>
<keyword id="KW-1133">Transmembrane helix</keyword>
<organism>
    <name type="scientific">Postia placenta (strain ATCC 44394 / Madison 698-R)</name>
    <name type="common">Brown rot fungus</name>
    <name type="synonym">Poria monticola</name>
    <dbReference type="NCBI Taxonomy" id="561896"/>
    <lineage>
        <taxon>Eukaryota</taxon>
        <taxon>Fungi</taxon>
        <taxon>Dikarya</taxon>
        <taxon>Basidiomycota</taxon>
        <taxon>Agaricomycotina</taxon>
        <taxon>Agaricomycetes</taxon>
        <taxon>Polyporales</taxon>
        <taxon>Adustoporiaceae</taxon>
        <taxon>Rhodonia</taxon>
    </lineage>
</organism>
<accession>F1SY95</accession>
<dbReference type="EC" id="1.-.-.-" evidence="7"/>
<dbReference type="EMBL" id="AB573306">
    <property type="protein sequence ID" value="BAK09439.1"/>
    <property type="molecule type" value="mRNA"/>
</dbReference>
<dbReference type="GlyCosmos" id="F1SY95">
    <property type="glycosylation" value="1 site, No reported glycans"/>
</dbReference>
<dbReference type="GO" id="GO:0016020">
    <property type="term" value="C:membrane"/>
    <property type="evidence" value="ECO:0007669"/>
    <property type="project" value="UniProtKB-SubCell"/>
</dbReference>
<dbReference type="GO" id="GO:0020037">
    <property type="term" value="F:heme binding"/>
    <property type="evidence" value="ECO:0007669"/>
    <property type="project" value="InterPro"/>
</dbReference>
<dbReference type="GO" id="GO:0005506">
    <property type="term" value="F:iron ion binding"/>
    <property type="evidence" value="ECO:0007669"/>
    <property type="project" value="InterPro"/>
</dbReference>
<dbReference type="GO" id="GO:0004497">
    <property type="term" value="F:monooxygenase activity"/>
    <property type="evidence" value="ECO:0007669"/>
    <property type="project" value="UniProtKB-KW"/>
</dbReference>
<dbReference type="GO" id="GO:0016705">
    <property type="term" value="F:oxidoreductase activity, acting on paired donors, with incorporation or reduction of molecular oxygen"/>
    <property type="evidence" value="ECO:0007669"/>
    <property type="project" value="InterPro"/>
</dbReference>
<dbReference type="GO" id="GO:0019748">
    <property type="term" value="P:secondary metabolic process"/>
    <property type="evidence" value="ECO:0007669"/>
    <property type="project" value="UniProtKB-ARBA"/>
</dbReference>
<dbReference type="CDD" id="cd11041">
    <property type="entry name" value="CYP503A1-like"/>
    <property type="match status" value="1"/>
</dbReference>
<dbReference type="Gene3D" id="1.10.630.10">
    <property type="entry name" value="Cytochrome P450"/>
    <property type="match status" value="1"/>
</dbReference>
<dbReference type="InterPro" id="IPR001128">
    <property type="entry name" value="Cyt_P450"/>
</dbReference>
<dbReference type="InterPro" id="IPR017972">
    <property type="entry name" value="Cyt_P450_CS"/>
</dbReference>
<dbReference type="InterPro" id="IPR002401">
    <property type="entry name" value="Cyt_P450_E_grp-I"/>
</dbReference>
<dbReference type="InterPro" id="IPR036396">
    <property type="entry name" value="Cyt_P450_sf"/>
</dbReference>
<dbReference type="PANTHER" id="PTHR46206">
    <property type="entry name" value="CYTOCHROME P450"/>
    <property type="match status" value="1"/>
</dbReference>
<dbReference type="Pfam" id="PF00067">
    <property type="entry name" value="p450"/>
    <property type="match status" value="1"/>
</dbReference>
<dbReference type="PRINTS" id="PR00463">
    <property type="entry name" value="EP450I"/>
</dbReference>
<dbReference type="SUPFAM" id="SSF48264">
    <property type="entry name" value="Cytochrome P450"/>
    <property type="match status" value="1"/>
</dbReference>
<dbReference type="PROSITE" id="PS00086">
    <property type="entry name" value="CYTOCHROME_P450"/>
    <property type="match status" value="1"/>
</dbReference>
<protein>
    <recommendedName>
        <fullName evidence="5">Cytochrome P450 monooxygenase 103</fullName>
        <ecNumber evidence="7">1.-.-.-</ecNumber>
    </recommendedName>
</protein>
<proteinExistence type="evidence at protein level"/>
<feature type="chain" id="PRO_0000451366" description="Cytochrome P450 monooxygenase 103">
    <location>
        <begin position="1"/>
        <end position="500"/>
    </location>
</feature>
<feature type="transmembrane region" description="Helical" evidence="2">
    <location>
        <begin position="1"/>
        <end position="21"/>
    </location>
</feature>
<feature type="transmembrane region" description="Helical" evidence="2">
    <location>
        <begin position="26"/>
        <end position="46"/>
    </location>
</feature>
<feature type="binding site" description="axial binding residue" evidence="1">
    <location>
        <position position="441"/>
    </location>
    <ligand>
        <name>heme</name>
        <dbReference type="ChEBI" id="CHEBI:30413"/>
    </ligand>
    <ligandPart>
        <name>Fe</name>
        <dbReference type="ChEBI" id="CHEBI:18248"/>
    </ligandPart>
</feature>
<feature type="glycosylation site" description="N-linked (GlcNAc...) asparagine" evidence="3">
    <location>
        <position position="374"/>
    </location>
</feature>